<organism>
    <name type="scientific">Xenopus laevis</name>
    <name type="common">African clawed frog</name>
    <dbReference type="NCBI Taxonomy" id="8355"/>
    <lineage>
        <taxon>Eukaryota</taxon>
        <taxon>Metazoa</taxon>
        <taxon>Chordata</taxon>
        <taxon>Craniata</taxon>
        <taxon>Vertebrata</taxon>
        <taxon>Euteleostomi</taxon>
        <taxon>Amphibia</taxon>
        <taxon>Batrachia</taxon>
        <taxon>Anura</taxon>
        <taxon>Pipoidea</taxon>
        <taxon>Pipidae</taxon>
        <taxon>Xenopodinae</taxon>
        <taxon>Xenopus</taxon>
        <taxon>Xenopus</taxon>
    </lineage>
</organism>
<protein>
    <recommendedName>
        <fullName evidence="2">ATP-dependent RNA helicase A protein</fullName>
        <ecNumber evidence="2">3.6.4.13</ecNumber>
    </recommendedName>
    <alternativeName>
        <fullName evidence="1">DEAH box protein 9</fullName>
    </alternativeName>
    <alternativeName>
        <fullName evidence="2">Nuclear DNA helicase II</fullName>
        <shortName evidence="2">NDH II</shortName>
    </alternativeName>
</protein>
<sequence length="1262" mass="140529">MADIKNFLYAWCGKKKLTPNYEIRAAGNKNRQKFMCEVRIDGFNYIGMGNSTNKKDAQTNSARDFVNYLVRVGEMRSDEVPSLGAELGDSIDGASLKSEGFSGPTGGPLPPHLSLQAESSGAAPMRSNTGFNPPAYGGGAQWERGANLKDYYAKREEQEAQATLESEEVDLNAGLHGNWTLENAKARLNQFFQKEKTQGEYKYSQVGPDHNRSFIAEMTLYVKQLGRKIIAREHGSNKKLAAQSCALSIVRQLYHLSVIEPYSGLTKKKEGESVEPYQVNLNPDIVKQLQSTIQELGIELPYPPEDPSQPVSLNLGKLVHFEPSQKQSHSGVVPWSPPQENWNPWTSSNIDEGPLAFATQEQISLELKNEHMYHIQDPNIKQVLIDRESLPVKKFEEEIMHAVHNSPVVIIRGATGCGKTTQVPQYILDEYIRNDRAAQCNIVVTQPRRISAVSVAERVAFERGEEIGKSCGYSVRFESVLPRPHASMLFCTVGVLLRKLESGIRGISHVIVDEIHERDINTDFLLVVLRDVIQAFPEIRVILMSATIDTSMFCEYFFNCPIIEVFGRTFPVQEYYLEDCIQMTQFIPPPRDKKKKDKDEEGGDDEETNCNLVCGDDYGPETRRSMSQLSEKETPLELIEALLKYIETLNVPGAVLVFLPGWNLIYAMQKHLEMNPHFGSHSYCILPLHSQIPRDEQRKVFDPVPDGIIKVILSTNIAETSITINDVVYVIDSCKQKVKLFTSHNNMTNYATVWASKTNLEQRKGRAGRVRPGFCFHLCSKARFDKLETHLTPEIFRTPLHEVALSIKLLRLGGIGHFLSKAIEPPPLDAVIEAEHTLRELDALDSNDELTPLGRILAKLPIEPRLGKMMIIGCIFYVGDALCTISAATCFPEPFISEGRRLGYVHRNFAGNRFSDHVALLSVFQAWDDARMGGEDAETRFCEHKRLNMATLRMTWEAKVQLKDILVNAGFPEECLMNQVFNNTGPDNNLDVVISLLAFGVYPNVCYHKEKRKILTTEGRNALIHKSSVNCPFSNQDLKYPSPFFVFSEKIRTRAISAKGMTMVSPLQLLLFASKKVMSDGEFIHLDDWIKLSMAHEESACITALRAALEALVVEVTKEPEILSQLDPVNEKMLNMIRVISKPSTAGISLVMGNSRFGDGPRPPKMARFDSGFQGNRGRGYHGGYNSGGGFRGAGNRGFRGSRGGSGPRGGYQGGGFRGNYRGGNQGGGFRGGYQSQGGYQSQGGGGYGGNFQGRGGFRGGF</sequence>
<reference key="1">
    <citation type="submission" date="2004-08" db="EMBL/GenBank/DDBJ databases">
        <authorList>
            <consortium name="NIH - Xenopus Gene Collection (XGC) project"/>
        </authorList>
    </citation>
    <scope>NUCLEOTIDE SEQUENCE [LARGE SCALE MRNA]</scope>
    <source>
        <tissue>Embryo</tissue>
    </source>
</reference>
<comment type="function">
    <text evidence="2">Multifunctional ATP-dependent nucleic acid helicase that unwinds DNA and RNA in a 3' to 5' direction and that plays important roles in many processes, such as DNA replication, transcriptional activation, post-transcriptional RNA regulation, mRNA translation and RNA-mediated gene silencing. Requires a 3'-single-stranded tail as entry site for acid nuclei unwinding activities as well as the binding and hydrolyzing of any of the four ribo- or deoxyribo-nucleotide triphosphates (NTPs). Binds to DNA, RNA and small interfering siRNA. Plays a role in DNA replication at origins of replication and cell cycle progression. Plays a role as a transcriptional coactivator acting as a bridging factor between polymerase II holoenzyme and transcription factors or cofactors. Plays several roles in post-transcriptional regulation of gene expression. Promotes pre-mRNA alternative splicing activities of a subset of genes. As component of a large PER complex, is involved in the negative regulation of 3' transcriptional termination of circadian target genes. Component of the coding region determinant (CRD)-mediated complex that promotes cytoplasmic MYC mRNA stability. Plays a role in mRNA translation. Also plays a role in the RNA-induced silencing complex (RISC) loading complex (RLC) assembly, and hence functions in the RISC-mediated gene silencing process. Mediates the attachment of heterogeneous nuclear ribonucleoproteins (hnRNPs) to actin filaments in the nucleus.</text>
</comment>
<comment type="catalytic activity">
    <reaction evidence="2">
        <text>ATP + H2O = ADP + phosphate + H(+)</text>
        <dbReference type="Rhea" id="RHEA:13065"/>
        <dbReference type="ChEBI" id="CHEBI:15377"/>
        <dbReference type="ChEBI" id="CHEBI:15378"/>
        <dbReference type="ChEBI" id="CHEBI:30616"/>
        <dbReference type="ChEBI" id="CHEBI:43474"/>
        <dbReference type="ChEBI" id="CHEBI:456216"/>
        <dbReference type="EC" id="3.6.4.13"/>
    </reaction>
</comment>
<comment type="subunit">
    <text evidence="2">Component of the coding region determinant (CRD)-mediated complex. Identified in mRNP granule complexes containing untranslated mRNAs. Associates with the RISC complex. Associates with the SMN complex. Associates with polysomes.</text>
</comment>
<comment type="subcellular location">
    <subcellularLocation>
        <location evidence="2">Nucleus</location>
    </subcellularLocation>
    <subcellularLocation>
        <location evidence="2">Nucleus</location>
        <location evidence="2">Nucleoplasm</location>
    </subcellularLocation>
    <subcellularLocation>
        <location evidence="2">Nucleus</location>
        <location evidence="2">Nucleolus</location>
    </subcellularLocation>
    <subcellularLocation>
        <location evidence="2">Cytoplasm</location>
    </subcellularLocation>
    <subcellularLocation>
        <location evidence="2">Cytoplasm</location>
        <location evidence="2">Cytoskeleton</location>
        <location evidence="2">Microtubule organizing center</location>
        <location evidence="2">Centrosome</location>
    </subcellularLocation>
    <text evidence="2">Nucleoplasmic shuttling protein. Its nuclear import involves the nucleocytoplasmic transport receptor Importin alpha/Importin beta receptor pathway in a Ran-dependent manner. In interphase, localizes in nuclear stress granules and at perichromatin fibrils and in cytoplasmic ribonucleoprotein granules. Excluded from the mitotic nucleus as early as prophase and re-entered the nucleus at telophase. Localized in cytoplasmic mRNP granules containing untranslated mRNAs.</text>
</comment>
<comment type="domain">
    <text evidence="2">DRBM domains cooperate for the binding to nucleic acid but not for unwinding helicase activity. The helicase-associated domain-2 (HA2) region is essential for the duplex RNA unwinding helicase activity. The minimal transactivation region (MTAD) mediates interaction with the RNA polymerase II holoenzyme and stimulates transcriptional activation. The oligonucleotide- or oligosaccharide-binding (OB-fold) and the repeated arginine and glycine-glycine (RGG) regions are dispensable for both RNA-binding and unwinding helicase activities. The RGG region contains both nuclear localization signal (NLS) and nuclear export signal (NES) and is necessary and sufficient for nucleocytoplasmic shuttling in a RNA-independent manner.</text>
</comment>
<comment type="similarity">
    <text evidence="8">Belongs to the DEAD box helicase family. DEAH subfamily.</text>
</comment>
<evidence type="ECO:0000250" key="1">
    <source>
        <dbReference type="UniProtKB" id="O70133"/>
    </source>
</evidence>
<evidence type="ECO:0000250" key="2">
    <source>
        <dbReference type="UniProtKB" id="Q08211"/>
    </source>
</evidence>
<evidence type="ECO:0000255" key="3"/>
<evidence type="ECO:0000255" key="4">
    <source>
        <dbReference type="PROSITE-ProRule" id="PRU00266"/>
    </source>
</evidence>
<evidence type="ECO:0000255" key="5">
    <source>
        <dbReference type="PROSITE-ProRule" id="PRU00541"/>
    </source>
</evidence>
<evidence type="ECO:0000255" key="6">
    <source>
        <dbReference type="PROSITE-ProRule" id="PRU00542"/>
    </source>
</evidence>
<evidence type="ECO:0000256" key="7">
    <source>
        <dbReference type="SAM" id="MobiDB-lite"/>
    </source>
</evidence>
<evidence type="ECO:0000305" key="8"/>
<name>DHX9_XENLA</name>
<dbReference type="EC" id="3.6.4.13" evidence="2"/>
<dbReference type="EMBL" id="BC079701">
    <property type="protein sequence ID" value="AAH79701.1"/>
    <property type="molecule type" value="mRNA"/>
</dbReference>
<dbReference type="RefSeq" id="NP_001087383.1">
    <property type="nucleotide sequence ID" value="NM_001093914.1"/>
</dbReference>
<dbReference type="SMR" id="Q68FK8"/>
<dbReference type="BioGRID" id="104067">
    <property type="interactions" value="1"/>
</dbReference>
<dbReference type="DNASU" id="447207"/>
<dbReference type="GeneID" id="447207"/>
<dbReference type="KEGG" id="xla:447207"/>
<dbReference type="AGR" id="Xenbase:XB-GENE-967780"/>
<dbReference type="CTD" id="447207"/>
<dbReference type="Xenbase" id="XB-GENE-967780">
    <property type="gene designation" value="dhx9.L"/>
</dbReference>
<dbReference type="OrthoDB" id="5600252at2759"/>
<dbReference type="Proteomes" id="UP000186698">
    <property type="component" value="Chromosome 4L"/>
</dbReference>
<dbReference type="Bgee" id="447207">
    <property type="expression patterns" value="Expressed in neurula embryo and 19 other cell types or tissues"/>
</dbReference>
<dbReference type="GO" id="GO:0015629">
    <property type="term" value="C:actin cytoskeleton"/>
    <property type="evidence" value="ECO:0000250"/>
    <property type="project" value="UniProtKB"/>
</dbReference>
<dbReference type="GO" id="GO:0005813">
    <property type="term" value="C:centrosome"/>
    <property type="evidence" value="ECO:0007669"/>
    <property type="project" value="UniProtKB-SubCell"/>
</dbReference>
<dbReference type="GO" id="GO:0070937">
    <property type="term" value="C:CRD-mediated mRNA stability complex"/>
    <property type="evidence" value="ECO:0000250"/>
    <property type="project" value="UniProtKB"/>
</dbReference>
<dbReference type="GO" id="GO:0005737">
    <property type="term" value="C:cytoplasm"/>
    <property type="evidence" value="ECO:0000250"/>
    <property type="project" value="UniProtKB"/>
</dbReference>
<dbReference type="GO" id="GO:0036464">
    <property type="term" value="C:cytoplasmic ribonucleoprotein granule"/>
    <property type="evidence" value="ECO:0000250"/>
    <property type="project" value="UniProtKB"/>
</dbReference>
<dbReference type="GO" id="GO:0016604">
    <property type="term" value="C:nuclear body"/>
    <property type="evidence" value="ECO:0000250"/>
    <property type="project" value="UniProtKB"/>
</dbReference>
<dbReference type="GO" id="GO:0097165">
    <property type="term" value="C:nuclear stress granule"/>
    <property type="evidence" value="ECO:0000250"/>
    <property type="project" value="UniProtKB"/>
</dbReference>
<dbReference type="GO" id="GO:0005730">
    <property type="term" value="C:nucleolus"/>
    <property type="evidence" value="ECO:0000318"/>
    <property type="project" value="GO_Central"/>
</dbReference>
<dbReference type="GO" id="GO:0005654">
    <property type="term" value="C:nucleoplasm"/>
    <property type="evidence" value="ECO:0000250"/>
    <property type="project" value="UniProtKB"/>
</dbReference>
<dbReference type="GO" id="GO:0005634">
    <property type="term" value="C:nucleus"/>
    <property type="evidence" value="ECO:0000250"/>
    <property type="project" value="UniProtKB"/>
</dbReference>
<dbReference type="GO" id="GO:0005726">
    <property type="term" value="C:perichromatin fibrils"/>
    <property type="evidence" value="ECO:0000250"/>
    <property type="project" value="UniProtKB"/>
</dbReference>
<dbReference type="GO" id="GO:1990904">
    <property type="term" value="C:ribonucleoprotein complex"/>
    <property type="evidence" value="ECO:0000318"/>
    <property type="project" value="GO_Central"/>
</dbReference>
<dbReference type="GO" id="GO:0016442">
    <property type="term" value="C:RISC complex"/>
    <property type="evidence" value="ECO:0000250"/>
    <property type="project" value="UniProtKB"/>
</dbReference>
<dbReference type="GO" id="GO:0070578">
    <property type="term" value="C:RISC-loading complex"/>
    <property type="evidence" value="ECO:0000250"/>
    <property type="project" value="UniProtKB"/>
</dbReference>
<dbReference type="GO" id="GO:0043138">
    <property type="term" value="F:3'-5' DNA helicase activity"/>
    <property type="evidence" value="ECO:0000250"/>
    <property type="project" value="UniProtKB"/>
</dbReference>
<dbReference type="GO" id="GO:0033679">
    <property type="term" value="F:3'-5' DNA/RNA helicase activity"/>
    <property type="evidence" value="ECO:0000250"/>
    <property type="project" value="UniProtKB"/>
</dbReference>
<dbReference type="GO" id="GO:0034458">
    <property type="term" value="F:3'-5' RNA helicase activity"/>
    <property type="evidence" value="ECO:0000250"/>
    <property type="project" value="UniProtKB"/>
</dbReference>
<dbReference type="GO" id="GO:0005524">
    <property type="term" value="F:ATP binding"/>
    <property type="evidence" value="ECO:0007669"/>
    <property type="project" value="UniProtKB-KW"/>
</dbReference>
<dbReference type="GO" id="GO:0016887">
    <property type="term" value="F:ATP hydrolysis activity"/>
    <property type="evidence" value="ECO:0000250"/>
    <property type="project" value="UniProtKB"/>
</dbReference>
<dbReference type="GO" id="GO:0140640">
    <property type="term" value="F:catalytic activity, acting on a nucleic acid"/>
    <property type="evidence" value="ECO:0000250"/>
    <property type="project" value="UniProtKB"/>
</dbReference>
<dbReference type="GO" id="GO:0031490">
    <property type="term" value="F:chromatin DNA binding"/>
    <property type="evidence" value="ECO:0000250"/>
    <property type="project" value="UniProtKB"/>
</dbReference>
<dbReference type="GO" id="GO:0003677">
    <property type="term" value="F:DNA binding"/>
    <property type="evidence" value="ECO:0000250"/>
    <property type="project" value="UniProtKB"/>
</dbReference>
<dbReference type="GO" id="GO:0003678">
    <property type="term" value="F:DNA helicase activity"/>
    <property type="evidence" value="ECO:0000250"/>
    <property type="project" value="UniProtKB"/>
</dbReference>
<dbReference type="GO" id="GO:0003688">
    <property type="term" value="F:DNA replication origin binding"/>
    <property type="evidence" value="ECO:0000250"/>
    <property type="project" value="UniProtKB"/>
</dbReference>
<dbReference type="GO" id="GO:0003690">
    <property type="term" value="F:double-stranded DNA binding"/>
    <property type="evidence" value="ECO:0000250"/>
    <property type="project" value="UniProtKB"/>
</dbReference>
<dbReference type="GO" id="GO:0003725">
    <property type="term" value="F:double-stranded RNA binding"/>
    <property type="evidence" value="ECO:0000250"/>
    <property type="project" value="UniProtKB"/>
</dbReference>
<dbReference type="GO" id="GO:0061676">
    <property type="term" value="F:importin-alpha family protein binding"/>
    <property type="evidence" value="ECO:0000250"/>
    <property type="project" value="UniProtKB"/>
</dbReference>
<dbReference type="GO" id="GO:0046872">
    <property type="term" value="F:metal ion binding"/>
    <property type="evidence" value="ECO:0007669"/>
    <property type="project" value="UniProtKB-KW"/>
</dbReference>
<dbReference type="GO" id="GO:0003729">
    <property type="term" value="F:mRNA binding"/>
    <property type="evidence" value="ECO:0000250"/>
    <property type="project" value="UniProtKB"/>
</dbReference>
<dbReference type="GO" id="GO:0047429">
    <property type="term" value="F:nucleoside triphosphate diphosphatase activity"/>
    <property type="evidence" value="ECO:0000250"/>
    <property type="project" value="UniProtKB"/>
</dbReference>
<dbReference type="GO" id="GO:1990841">
    <property type="term" value="F:promoter-specific chromatin binding"/>
    <property type="evidence" value="ECO:0000250"/>
    <property type="project" value="UniProtKB"/>
</dbReference>
<dbReference type="GO" id="GO:0017111">
    <property type="term" value="F:ribonucleoside triphosphate phosphatase activity"/>
    <property type="evidence" value="ECO:0000250"/>
    <property type="project" value="UniProtKB"/>
</dbReference>
<dbReference type="GO" id="GO:0043022">
    <property type="term" value="F:ribosome binding"/>
    <property type="evidence" value="ECO:0000250"/>
    <property type="project" value="UniProtKB"/>
</dbReference>
<dbReference type="GO" id="GO:1905172">
    <property type="term" value="F:RISC complex binding"/>
    <property type="evidence" value="ECO:0000250"/>
    <property type="project" value="UniProtKB"/>
</dbReference>
<dbReference type="GO" id="GO:0003723">
    <property type="term" value="F:RNA binding"/>
    <property type="evidence" value="ECO:0000250"/>
    <property type="project" value="UniProtKB"/>
</dbReference>
<dbReference type="GO" id="GO:0003724">
    <property type="term" value="F:RNA helicase activity"/>
    <property type="evidence" value="ECO:0000250"/>
    <property type="project" value="UniProtKB"/>
</dbReference>
<dbReference type="GO" id="GO:0070063">
    <property type="term" value="F:RNA polymerase binding"/>
    <property type="evidence" value="ECO:0000250"/>
    <property type="project" value="UniProtKB"/>
</dbReference>
<dbReference type="GO" id="GO:0000978">
    <property type="term" value="F:RNA polymerase II cis-regulatory region sequence-specific DNA binding"/>
    <property type="evidence" value="ECO:0000250"/>
    <property type="project" value="UniProtKB"/>
</dbReference>
<dbReference type="GO" id="GO:0035613">
    <property type="term" value="F:RNA stem-loop binding"/>
    <property type="evidence" value="ECO:0000250"/>
    <property type="project" value="UniProtKB"/>
</dbReference>
<dbReference type="GO" id="GO:1990825">
    <property type="term" value="F:sequence-specific mRNA binding"/>
    <property type="evidence" value="ECO:0000250"/>
    <property type="project" value="UniProtKB"/>
</dbReference>
<dbReference type="GO" id="GO:1990518">
    <property type="term" value="F:single-stranded 3'-5' DNA helicase activity"/>
    <property type="evidence" value="ECO:0000250"/>
    <property type="project" value="UniProtKB"/>
</dbReference>
<dbReference type="GO" id="GO:0003697">
    <property type="term" value="F:single-stranded DNA binding"/>
    <property type="evidence" value="ECO:0000250"/>
    <property type="project" value="UniProtKB"/>
</dbReference>
<dbReference type="GO" id="GO:0003727">
    <property type="term" value="F:single-stranded RNA binding"/>
    <property type="evidence" value="ECO:0000250"/>
    <property type="project" value="UniProtKB"/>
</dbReference>
<dbReference type="GO" id="GO:0003713">
    <property type="term" value="F:transcription coactivator activity"/>
    <property type="evidence" value="ECO:0000250"/>
    <property type="project" value="UniProtKB"/>
</dbReference>
<dbReference type="GO" id="GO:0045142">
    <property type="term" value="F:triplex DNA binding"/>
    <property type="evidence" value="ECO:0000250"/>
    <property type="project" value="UniProtKB"/>
</dbReference>
<dbReference type="GO" id="GO:0000380">
    <property type="term" value="P:alternative mRNA splicing, via spliceosome"/>
    <property type="evidence" value="ECO:0000250"/>
    <property type="project" value="UniProtKB"/>
</dbReference>
<dbReference type="GO" id="GO:0006325">
    <property type="term" value="P:chromatin organization"/>
    <property type="evidence" value="ECO:0000250"/>
    <property type="project" value="UniProtKB"/>
</dbReference>
<dbReference type="GO" id="GO:0006260">
    <property type="term" value="P:DNA replication"/>
    <property type="evidence" value="ECO:0007669"/>
    <property type="project" value="UniProtKB-KW"/>
</dbReference>
<dbReference type="GO" id="GO:0006353">
    <property type="term" value="P:DNA-templated transcription termination"/>
    <property type="evidence" value="ECO:0007669"/>
    <property type="project" value="UniProtKB-KW"/>
</dbReference>
<dbReference type="GO" id="GO:0035195">
    <property type="term" value="P:miRNA-mediated post-transcriptional gene silencing"/>
    <property type="evidence" value="ECO:0000250"/>
    <property type="project" value="UniProtKB"/>
</dbReference>
<dbReference type="GO" id="GO:0051028">
    <property type="term" value="P:mRNA transport"/>
    <property type="evidence" value="ECO:0007669"/>
    <property type="project" value="UniProtKB-KW"/>
</dbReference>
<dbReference type="GO" id="GO:2000767">
    <property type="term" value="P:positive regulation of cytoplasmic translation"/>
    <property type="evidence" value="ECO:0000250"/>
    <property type="project" value="UniProtKB"/>
</dbReference>
<dbReference type="GO" id="GO:0045739">
    <property type="term" value="P:positive regulation of DNA repair"/>
    <property type="evidence" value="ECO:0000250"/>
    <property type="project" value="UniProtKB"/>
</dbReference>
<dbReference type="GO" id="GO:0045740">
    <property type="term" value="P:positive regulation of DNA replication"/>
    <property type="evidence" value="ECO:0000250"/>
    <property type="project" value="UniProtKB"/>
</dbReference>
<dbReference type="GO" id="GO:0048146">
    <property type="term" value="P:positive regulation of fibroblast proliferation"/>
    <property type="evidence" value="ECO:0000250"/>
    <property type="project" value="UniProtKB"/>
</dbReference>
<dbReference type="GO" id="GO:0051092">
    <property type="term" value="P:positive regulation of NF-kappaB transcription factor activity"/>
    <property type="evidence" value="ECO:0000250"/>
    <property type="project" value="UniProtKB"/>
</dbReference>
<dbReference type="GO" id="GO:0046833">
    <property type="term" value="P:positive regulation of RNA export from nucleus"/>
    <property type="evidence" value="ECO:0000250"/>
    <property type="project" value="UniProtKB"/>
</dbReference>
<dbReference type="GO" id="GO:0045944">
    <property type="term" value="P:positive regulation of transcription by RNA polymerase II"/>
    <property type="evidence" value="ECO:0000250"/>
    <property type="project" value="UniProtKB"/>
</dbReference>
<dbReference type="GO" id="GO:2000765">
    <property type="term" value="P:regulation of cytoplasmic translation"/>
    <property type="evidence" value="ECO:0000250"/>
    <property type="project" value="UniProtKB"/>
</dbReference>
<dbReference type="GO" id="GO:0050684">
    <property type="term" value="P:regulation of mRNA processing"/>
    <property type="evidence" value="ECO:0000250"/>
    <property type="project" value="UniProtKB"/>
</dbReference>
<dbReference type="GO" id="GO:0070922">
    <property type="term" value="P:RISC complex assembly"/>
    <property type="evidence" value="ECO:0000250"/>
    <property type="project" value="UniProtKB"/>
</dbReference>
<dbReference type="CDD" id="cd17972">
    <property type="entry name" value="DEXHc_DHX9"/>
    <property type="match status" value="1"/>
</dbReference>
<dbReference type="CDD" id="cd19854">
    <property type="entry name" value="DSRM_DHX9_rpt1"/>
    <property type="match status" value="1"/>
</dbReference>
<dbReference type="CDD" id="cd19855">
    <property type="entry name" value="DSRM_DHX9_rpt2"/>
    <property type="match status" value="1"/>
</dbReference>
<dbReference type="CDD" id="cd18791">
    <property type="entry name" value="SF2_C_RHA"/>
    <property type="match status" value="1"/>
</dbReference>
<dbReference type="FunFam" id="3.30.160.20:FF:000026">
    <property type="entry name" value="ATP-dependent RNA helicase A"/>
    <property type="match status" value="1"/>
</dbReference>
<dbReference type="FunFam" id="3.30.160.20:FF:000028">
    <property type="entry name" value="ATP-dependent RNA helicase A"/>
    <property type="match status" value="1"/>
</dbReference>
<dbReference type="FunFam" id="3.40.50.300:FF:000677">
    <property type="entry name" value="ATP-dependent RNA helicase A"/>
    <property type="match status" value="1"/>
</dbReference>
<dbReference type="FunFam" id="1.20.120.1080:FF:000006">
    <property type="entry name" value="ATP-dependent RNA helicase A protein"/>
    <property type="match status" value="1"/>
</dbReference>
<dbReference type="FunFam" id="3.40.50.300:FF:000284">
    <property type="entry name" value="probable ATP-dependent RNA helicase YTHDC2"/>
    <property type="match status" value="1"/>
</dbReference>
<dbReference type="Gene3D" id="1.20.120.1080">
    <property type="match status" value="1"/>
</dbReference>
<dbReference type="Gene3D" id="3.30.160.20">
    <property type="match status" value="2"/>
</dbReference>
<dbReference type="Gene3D" id="3.40.50.300">
    <property type="entry name" value="P-loop containing nucleotide triphosphate hydrolases"/>
    <property type="match status" value="2"/>
</dbReference>
<dbReference type="InterPro" id="IPR011709">
    <property type="entry name" value="DEAD-box_helicase_OB_fold"/>
</dbReference>
<dbReference type="InterPro" id="IPR011545">
    <property type="entry name" value="DEAD/DEAH_box_helicase_dom"/>
</dbReference>
<dbReference type="InterPro" id="IPR044447">
    <property type="entry name" value="DHX9_DEXHc"/>
</dbReference>
<dbReference type="InterPro" id="IPR044445">
    <property type="entry name" value="DHX9_DSRM_1"/>
</dbReference>
<dbReference type="InterPro" id="IPR044446">
    <property type="entry name" value="DHX9_DSRM_2"/>
</dbReference>
<dbReference type="InterPro" id="IPR002464">
    <property type="entry name" value="DNA/RNA_helicase_DEAH_CS"/>
</dbReference>
<dbReference type="InterPro" id="IPR014720">
    <property type="entry name" value="dsRBD_dom"/>
</dbReference>
<dbReference type="InterPro" id="IPR048333">
    <property type="entry name" value="HA2_WH"/>
</dbReference>
<dbReference type="InterPro" id="IPR007502">
    <property type="entry name" value="Helicase-assoc_dom"/>
</dbReference>
<dbReference type="InterPro" id="IPR014001">
    <property type="entry name" value="Helicase_ATP-bd"/>
</dbReference>
<dbReference type="InterPro" id="IPR001650">
    <property type="entry name" value="Helicase_C-like"/>
</dbReference>
<dbReference type="InterPro" id="IPR027417">
    <property type="entry name" value="P-loop_NTPase"/>
</dbReference>
<dbReference type="PANTHER" id="PTHR18934">
    <property type="entry name" value="ATP-DEPENDENT RNA HELICASE"/>
    <property type="match status" value="1"/>
</dbReference>
<dbReference type="PANTHER" id="PTHR18934:SF119">
    <property type="entry name" value="ATP-DEPENDENT RNA HELICASE A"/>
    <property type="match status" value="1"/>
</dbReference>
<dbReference type="Pfam" id="PF00270">
    <property type="entry name" value="DEAD"/>
    <property type="match status" value="1"/>
</dbReference>
<dbReference type="Pfam" id="PF00035">
    <property type="entry name" value="dsrm"/>
    <property type="match status" value="2"/>
</dbReference>
<dbReference type="Pfam" id="PF21010">
    <property type="entry name" value="HA2_C"/>
    <property type="match status" value="1"/>
</dbReference>
<dbReference type="Pfam" id="PF04408">
    <property type="entry name" value="HA2_N"/>
    <property type="match status" value="1"/>
</dbReference>
<dbReference type="Pfam" id="PF00271">
    <property type="entry name" value="Helicase_C"/>
    <property type="match status" value="1"/>
</dbReference>
<dbReference type="Pfam" id="PF07717">
    <property type="entry name" value="OB_NTP_bind"/>
    <property type="match status" value="1"/>
</dbReference>
<dbReference type="SMART" id="SM00487">
    <property type="entry name" value="DEXDc"/>
    <property type="match status" value="1"/>
</dbReference>
<dbReference type="SMART" id="SM00358">
    <property type="entry name" value="DSRM"/>
    <property type="match status" value="2"/>
</dbReference>
<dbReference type="SMART" id="SM00847">
    <property type="entry name" value="HA2"/>
    <property type="match status" value="1"/>
</dbReference>
<dbReference type="SMART" id="SM00490">
    <property type="entry name" value="HELICc"/>
    <property type="match status" value="1"/>
</dbReference>
<dbReference type="SUPFAM" id="SSF54768">
    <property type="entry name" value="dsRNA-binding domain-like"/>
    <property type="match status" value="2"/>
</dbReference>
<dbReference type="SUPFAM" id="SSF52540">
    <property type="entry name" value="P-loop containing nucleoside triphosphate hydrolases"/>
    <property type="match status" value="1"/>
</dbReference>
<dbReference type="PROSITE" id="PS00690">
    <property type="entry name" value="DEAH_ATP_HELICASE"/>
    <property type="match status" value="1"/>
</dbReference>
<dbReference type="PROSITE" id="PS50137">
    <property type="entry name" value="DS_RBD"/>
    <property type="match status" value="2"/>
</dbReference>
<dbReference type="PROSITE" id="PS51192">
    <property type="entry name" value="HELICASE_ATP_BIND_1"/>
    <property type="match status" value="1"/>
</dbReference>
<dbReference type="PROSITE" id="PS51194">
    <property type="entry name" value="HELICASE_CTER"/>
    <property type="match status" value="1"/>
</dbReference>
<accession>Q68FK8</accession>
<gene>
    <name evidence="2" type="primary">dhx9</name>
</gene>
<keyword id="KW-0010">Activator</keyword>
<keyword id="KW-0067">ATP-binding</keyword>
<keyword id="KW-0963">Cytoplasm</keyword>
<keyword id="KW-0206">Cytoskeleton</keyword>
<keyword id="KW-0235">DNA replication</keyword>
<keyword id="KW-0238">DNA-binding</keyword>
<keyword id="KW-0347">Helicase</keyword>
<keyword id="KW-0378">Hydrolase</keyword>
<keyword id="KW-0464">Manganese</keyword>
<keyword id="KW-0479">Metal-binding</keyword>
<keyword id="KW-0507">mRNA processing</keyword>
<keyword id="KW-0508">mRNA splicing</keyword>
<keyword id="KW-0509">mRNA transport</keyword>
<keyword id="KW-0547">Nucleotide-binding</keyword>
<keyword id="KW-0539">Nucleus</keyword>
<keyword id="KW-1185">Reference proteome</keyword>
<keyword id="KW-0677">Repeat</keyword>
<keyword id="KW-0694">RNA-binding</keyword>
<keyword id="KW-0943">RNA-mediated gene silencing</keyword>
<keyword id="KW-0804">Transcription</keyword>
<keyword id="KW-0805">Transcription regulation</keyword>
<keyword id="KW-0806">Transcription termination</keyword>
<keyword id="KW-0810">Translation regulation</keyword>
<keyword id="KW-0813">Transport</keyword>
<proteinExistence type="evidence at transcript level"/>
<feature type="chain" id="PRO_0000055160" description="ATP-dependent RNA helicase A protein">
    <location>
        <begin position="1"/>
        <end position="1262"/>
    </location>
</feature>
<feature type="domain" description="DRBM 1" evidence="2 4">
    <location>
        <begin position="3"/>
        <end position="71"/>
    </location>
</feature>
<feature type="domain" description="DRBM 2" evidence="2 4">
    <location>
        <begin position="183"/>
        <end position="255"/>
    </location>
</feature>
<feature type="domain" description="Helicase ATP-binding" evidence="2 5">
    <location>
        <begin position="400"/>
        <end position="566"/>
    </location>
</feature>
<feature type="domain" description="Helicase C-terminal" evidence="6">
    <location>
        <begin position="638"/>
        <end position="811"/>
    </location>
</feature>
<feature type="region of interest" description="siRNA-binding" evidence="2">
    <location>
        <begin position="5"/>
        <end position="9"/>
    </location>
</feature>
<feature type="region of interest" description="siRNA-binding" evidence="2">
    <location>
        <begin position="53"/>
        <end position="55"/>
    </location>
</feature>
<feature type="region of interest" description="Disordered" evidence="7">
    <location>
        <begin position="94"/>
        <end position="141"/>
    </location>
</feature>
<feature type="region of interest" description="siRNA-binding" evidence="2">
    <location>
        <begin position="185"/>
        <end position="189"/>
    </location>
</feature>
<feature type="region of interest" description="siRNA-binding" evidence="2">
    <location>
        <begin position="237"/>
        <end position="239"/>
    </location>
</feature>
<feature type="region of interest" description="MTAD" evidence="2">
    <location>
        <begin position="334"/>
        <end position="382"/>
    </location>
</feature>
<feature type="region of interest" description="Core helicase" evidence="2">
    <location>
        <begin position="400"/>
        <end position="811"/>
    </location>
</feature>
<feature type="region of interest" description="Disordered" evidence="7">
    <location>
        <begin position="588"/>
        <end position="614"/>
    </location>
</feature>
<feature type="region of interest" description="HA2" evidence="2">
    <location>
        <begin position="833"/>
        <end position="921"/>
    </location>
</feature>
<feature type="region of interest" description="OB-fold" evidence="2">
    <location>
        <begin position="960"/>
        <end position="1076"/>
    </location>
</feature>
<feature type="region of interest" description="RGG" evidence="2">
    <location>
        <begin position="1152"/>
        <end position="1262"/>
    </location>
</feature>
<feature type="region of interest" description="Disordered" evidence="7">
    <location>
        <begin position="1197"/>
        <end position="1262"/>
    </location>
</feature>
<feature type="short sequence motif" description="DEIH box">
    <location>
        <begin position="513"/>
        <end position="516"/>
    </location>
</feature>
<feature type="short sequence motif" description="Nuclear localization signal (NLS1)" evidence="3">
    <location>
        <begin position="588"/>
        <end position="597"/>
    </location>
</feature>
<feature type="short sequence motif" description="Nuclear localization signal (NLS2)" evidence="2">
    <location>
        <begin position="1158"/>
        <end position="1170"/>
    </location>
</feature>
<feature type="binding site" evidence="2 5">
    <location>
        <begin position="413"/>
        <end position="421"/>
    </location>
    <ligand>
        <name>ATP</name>
        <dbReference type="ChEBI" id="CHEBI:30616"/>
    </ligand>
</feature>
<feature type="binding site" evidence="2">
    <location>
        <position position="420"/>
    </location>
    <ligand>
        <name>Mn(2+)</name>
        <dbReference type="ChEBI" id="CHEBI:29035"/>
    </ligand>
</feature>
<feature type="binding site" evidence="2">
    <location>
        <position position="514"/>
    </location>
    <ligand>
        <name>Mn(2+)</name>
        <dbReference type="ChEBI" id="CHEBI:29035"/>
    </ligand>
</feature>